<dbReference type="EMBL" id="CM001232">
    <property type="protein sequence ID" value="EHA54799.1"/>
    <property type="molecule type" value="Genomic_DNA"/>
</dbReference>
<dbReference type="RefSeq" id="XP_003714606.1">
    <property type="nucleotide sequence ID" value="XM_003714558.1"/>
</dbReference>
<dbReference type="SMR" id="G4MUB2"/>
<dbReference type="STRING" id="242507.G4MUB2"/>
<dbReference type="EnsemblFungi" id="MGG_01620T0">
    <property type="protein sequence ID" value="MGG_01620T0"/>
    <property type="gene ID" value="MGG_01620"/>
</dbReference>
<dbReference type="GeneID" id="2679081"/>
<dbReference type="KEGG" id="mgr:MGG_01620"/>
<dbReference type="VEuPathDB" id="FungiDB:MGG_01620"/>
<dbReference type="eggNOG" id="ENOG502S1B4">
    <property type="taxonomic scope" value="Eukaryota"/>
</dbReference>
<dbReference type="HOGENOM" id="CLU_022491_0_1_1"/>
<dbReference type="InParanoid" id="G4MUB2"/>
<dbReference type="OMA" id="MIQKTNA"/>
<dbReference type="OrthoDB" id="1746739at2759"/>
<dbReference type="PHI-base" id="PHI:4112"/>
<dbReference type="Proteomes" id="UP000009058">
    <property type="component" value="Chromosome 2"/>
</dbReference>
<dbReference type="GO" id="GO:0005737">
    <property type="term" value="C:cytoplasm"/>
    <property type="evidence" value="ECO:0007669"/>
    <property type="project" value="UniProtKB-SubCell"/>
</dbReference>
<dbReference type="GO" id="GO:0005634">
    <property type="term" value="C:nucleus"/>
    <property type="evidence" value="ECO:0007669"/>
    <property type="project" value="UniProtKB-SubCell"/>
</dbReference>
<dbReference type="GO" id="GO:0030435">
    <property type="term" value="P:sporulation resulting in formation of a cellular spore"/>
    <property type="evidence" value="ECO:0007669"/>
    <property type="project" value="UniProtKB-KW"/>
</dbReference>
<dbReference type="Gene3D" id="2.60.40.3960">
    <property type="entry name" value="Velvet domain"/>
    <property type="match status" value="2"/>
</dbReference>
<dbReference type="InterPro" id="IPR021740">
    <property type="entry name" value="Velvet"/>
</dbReference>
<dbReference type="InterPro" id="IPR037525">
    <property type="entry name" value="Velvet_dom"/>
</dbReference>
<dbReference type="InterPro" id="IPR038491">
    <property type="entry name" value="Velvet_dom_sf"/>
</dbReference>
<dbReference type="PANTHER" id="PTHR33572">
    <property type="entry name" value="SPORE DEVELOPMENT REGULATOR VOSA"/>
    <property type="match status" value="1"/>
</dbReference>
<dbReference type="PANTHER" id="PTHR33572:SF3">
    <property type="entry name" value="VELVET COMPLEX SUBUNIT B"/>
    <property type="match status" value="1"/>
</dbReference>
<dbReference type="Pfam" id="PF11754">
    <property type="entry name" value="Velvet"/>
    <property type="match status" value="1"/>
</dbReference>
<dbReference type="PROSITE" id="PS51821">
    <property type="entry name" value="VELVET"/>
    <property type="match status" value="1"/>
</dbReference>
<gene>
    <name evidence="5" type="primary">VELB</name>
    <name type="ORF">MGG_01620</name>
</gene>
<protein>
    <recommendedName>
        <fullName evidence="6">Velvet complex subunit B</fullName>
    </recommendedName>
</protein>
<evidence type="ECO:0000250" key="1">
    <source>
        <dbReference type="UniProtKB" id="C8VTS4"/>
    </source>
</evidence>
<evidence type="ECO:0000255" key="2">
    <source>
        <dbReference type="PROSITE-ProRule" id="PRU01165"/>
    </source>
</evidence>
<evidence type="ECO:0000256" key="3">
    <source>
        <dbReference type="SAM" id="MobiDB-lite"/>
    </source>
</evidence>
<evidence type="ECO:0000269" key="4">
    <source>
    </source>
</evidence>
<evidence type="ECO:0000303" key="5">
    <source>
    </source>
</evidence>
<evidence type="ECO:0000305" key="6"/>
<accession>G4MUB2</accession>
<sequence length="441" mass="47466">MNPGYSSTASQPGHNPSALPHDVHHALPAIGHPGSYHASMPQLPSIPPSMPPHYSDQYGMMQQPQDQPAPSSTTEGGAETKPSADAVARTQKKLQPHVGEQDGRKYRLDVVQQPKRARMCGFGDKDRRPITPPPCIRLIVTDAVTGKEIDCNEIEHTMYVLNVDLWSEDAQQEVNLVRHTSATPSISSTTPASFAQIDSTPPAFAQIPGTNREMPSYPQSQAYAPSVTPFAQQGGYGQQAISPVGPHYGMVANTYGGQGGYTYASPTDMHPHQLGSQVGPYGPRIFNGAPDMGMHQRMALQGTHQGAPPQGMFTRNLIGSLSASAFRLNDPQEKIGIWFVLQDLSVRTEGIFRLRFSYVNVGAPTRTPNGGPANQTSILNTGKAPILASCFSDAFQVYSAKKFPGVCESTPLSKCFAGQGIKIPIRKAEGGGKNNDDDDDY</sequence>
<proteinExistence type="inferred from homology"/>
<feature type="chain" id="PRO_0000435908" description="Velvet complex subunit B">
    <location>
        <begin position="1"/>
        <end position="441"/>
    </location>
</feature>
<feature type="domain" description="Velvet" evidence="2">
    <location>
        <begin position="100"/>
        <end position="426"/>
    </location>
</feature>
<feature type="region of interest" description="Disordered" evidence="3">
    <location>
        <begin position="1"/>
        <end position="104"/>
    </location>
</feature>
<feature type="compositionally biased region" description="Polar residues" evidence="3">
    <location>
        <begin position="1"/>
        <end position="14"/>
    </location>
</feature>
<feature type="compositionally biased region" description="Polar residues" evidence="3">
    <location>
        <begin position="60"/>
        <end position="75"/>
    </location>
</feature>
<keyword id="KW-0963">Cytoplasm</keyword>
<keyword id="KW-0539">Nucleus</keyword>
<keyword id="KW-1185">Reference proteome</keyword>
<keyword id="KW-0749">Sporulation</keyword>
<keyword id="KW-0804">Transcription</keyword>
<keyword id="KW-0805">Transcription regulation</keyword>
<organism>
    <name type="scientific">Pyricularia oryzae (strain 70-15 / ATCC MYA-4617 / FGSC 8958)</name>
    <name type="common">Rice blast fungus</name>
    <name type="synonym">Magnaporthe oryzae</name>
    <dbReference type="NCBI Taxonomy" id="242507"/>
    <lineage>
        <taxon>Eukaryota</taxon>
        <taxon>Fungi</taxon>
        <taxon>Dikarya</taxon>
        <taxon>Ascomycota</taxon>
        <taxon>Pezizomycotina</taxon>
        <taxon>Sordariomycetes</taxon>
        <taxon>Sordariomycetidae</taxon>
        <taxon>Magnaporthales</taxon>
        <taxon>Pyriculariaceae</taxon>
        <taxon>Pyricularia</taxon>
    </lineage>
</organism>
<reference key="1">
    <citation type="journal article" date="2005" name="Nature">
        <title>The genome sequence of the rice blast fungus Magnaporthe grisea.</title>
        <authorList>
            <person name="Dean R.A."/>
            <person name="Talbot N.J."/>
            <person name="Ebbole D.J."/>
            <person name="Farman M.L."/>
            <person name="Mitchell T.K."/>
            <person name="Orbach M.J."/>
            <person name="Thon M.R."/>
            <person name="Kulkarni R."/>
            <person name="Xu J.-R."/>
            <person name="Pan H."/>
            <person name="Read N.D."/>
            <person name="Lee Y.-H."/>
            <person name="Carbone I."/>
            <person name="Brown D."/>
            <person name="Oh Y.Y."/>
            <person name="Donofrio N."/>
            <person name="Jeong J.S."/>
            <person name="Soanes D.M."/>
            <person name="Djonovic S."/>
            <person name="Kolomiets E."/>
            <person name="Rehmeyer C."/>
            <person name="Li W."/>
            <person name="Harding M."/>
            <person name="Kim S."/>
            <person name="Lebrun M.-H."/>
            <person name="Bohnert H."/>
            <person name="Coughlan S."/>
            <person name="Butler J."/>
            <person name="Calvo S.E."/>
            <person name="Ma L.-J."/>
            <person name="Nicol R."/>
            <person name="Purcell S."/>
            <person name="Nusbaum C."/>
            <person name="Galagan J.E."/>
            <person name="Birren B.W."/>
        </authorList>
    </citation>
    <scope>NUCLEOTIDE SEQUENCE [LARGE SCALE GENOMIC DNA]</scope>
    <source>
        <strain>70-15 / ATCC MYA-4617 / FGSC 8958</strain>
    </source>
</reference>
<reference key="2">
    <citation type="journal article" date="2014" name="Fungal Genet. Biol.">
        <title>Comparative functional analysis of the velvet gene family reveals unique roles in fungal development and pathogenicity in Magnaporthe oryzae.</title>
        <authorList>
            <person name="Kim H.J."/>
            <person name="Han J.H."/>
            <person name="Kim K.S."/>
            <person name="Lee Y.H."/>
        </authorList>
    </citation>
    <scope>FUNCTION</scope>
    <scope>DISRUPTION PHENOTYPE</scope>
</reference>
<comment type="function">
    <text evidence="1 4">Component of the velvet transcription factor complex that controls sexual/asexual developmental ratio in response to light, promoting sexual development in the darkness while stimulating asexual sporulation under illumination (PubMed:24632440). The velvet complex acts as a global regulator for secondary metabolite gene expression (By similarity). Component of the VELB-VOSA heterodimeric complex that plays a dual role in activating genes associated with spore maturation and repressing certain development-associated genes (By similarity). The VELB-VOSA complex binds DNA through the DNA-binding domain of VOSA that recognizes an 11-nucleotide consensus sequence 5'-CTGGCCGCGGC-3' consisting of two motifs in the promoters of key developmental regulatory genes (By similarity). Involved in the regulation of the response to eactive oxygen species (ROS) stress (PubMed:24632440).</text>
</comment>
<comment type="subunit">
    <text evidence="1">Component of the heterotrimeric velvet complex composed of LAEA, VEA and VELB; VEA acting as a bridging protein between LAEA and VELB (By similarity). Forms a heterodimeric complex with VOSA; the formation of the VELB-VOSA complex is light-dependent (By similarity).</text>
</comment>
<comment type="subcellular location">
    <subcellularLocation>
        <location evidence="1">Nucleus</location>
    </subcellularLocation>
    <subcellularLocation>
        <location evidence="1">Cytoplasm</location>
    </subcellularLocation>
    <text evidence="1">Nuclear localization is mediated by VEA (By similarity).</text>
</comment>
<comment type="disruption phenotype">
    <text evidence="4">Leads to reduced formation of conidia (PubMed:24632440).</text>
</comment>
<comment type="similarity">
    <text evidence="6">Belongs to the velvet family. VelB subfamily.</text>
</comment>
<name>VELB_PYRO7</name>